<feature type="chain" id="PRO_1000195610" description="Large ribosomal subunit protein uL11">
    <location>
        <begin position="1"/>
        <end position="145"/>
    </location>
</feature>
<keyword id="KW-0488">Methylation</keyword>
<keyword id="KW-0687">Ribonucleoprotein</keyword>
<keyword id="KW-0689">Ribosomal protein</keyword>
<keyword id="KW-0694">RNA-binding</keyword>
<keyword id="KW-0699">rRNA-binding</keyword>
<proteinExistence type="inferred from homology"/>
<name>RL11_COXB1</name>
<sequence length="145" mass="15523">MAKKITGYIRLQIKAGEANPSPPVGPALGQHGVNIREFCESFNTATKNIEKGLPTPVIITVYADRTFSFITKTPPASVLLKKFVLKGKSGSARPNTEKVGKATRQQLEEIAKMKTPDLTAADLEAAIRTIAGTARSMGIDVEGVE</sequence>
<accession>B6J5B8</accession>
<comment type="function">
    <text evidence="1">Forms part of the ribosomal stalk which helps the ribosome interact with GTP-bound translation factors.</text>
</comment>
<comment type="subunit">
    <text evidence="1">Part of the ribosomal stalk of the 50S ribosomal subunit. Interacts with L10 and the large rRNA to form the base of the stalk. L10 forms an elongated spine to which L12 dimers bind in a sequential fashion forming a multimeric L10(L12)X complex.</text>
</comment>
<comment type="PTM">
    <text evidence="1">One or more lysine residues are methylated.</text>
</comment>
<comment type="similarity">
    <text evidence="1">Belongs to the universal ribosomal protein uL11 family.</text>
</comment>
<reference key="1">
    <citation type="journal article" date="2009" name="Infect. Immun.">
        <title>Comparative genomics reveal extensive transposon-mediated genomic plasticity and diversity among potential effector proteins within the genus Coxiella.</title>
        <authorList>
            <person name="Beare P.A."/>
            <person name="Unsworth N."/>
            <person name="Andoh M."/>
            <person name="Voth D.E."/>
            <person name="Omsland A."/>
            <person name="Gilk S.D."/>
            <person name="Williams K.P."/>
            <person name="Sobral B.W."/>
            <person name="Kupko J.J. III"/>
            <person name="Porcella S.F."/>
            <person name="Samuel J.E."/>
            <person name="Heinzen R.A."/>
        </authorList>
    </citation>
    <scope>NUCLEOTIDE SEQUENCE [LARGE SCALE GENOMIC DNA]</scope>
    <source>
        <strain>CbuK_Q154</strain>
    </source>
</reference>
<organism>
    <name type="scientific">Coxiella burnetii (strain CbuK_Q154)</name>
    <name type="common">Coxiella burnetii (strain Q154)</name>
    <dbReference type="NCBI Taxonomy" id="434924"/>
    <lineage>
        <taxon>Bacteria</taxon>
        <taxon>Pseudomonadati</taxon>
        <taxon>Pseudomonadota</taxon>
        <taxon>Gammaproteobacteria</taxon>
        <taxon>Legionellales</taxon>
        <taxon>Coxiellaceae</taxon>
        <taxon>Coxiella</taxon>
    </lineage>
</organism>
<evidence type="ECO:0000255" key="1">
    <source>
        <dbReference type="HAMAP-Rule" id="MF_00736"/>
    </source>
</evidence>
<evidence type="ECO:0000305" key="2"/>
<dbReference type="EMBL" id="CP001020">
    <property type="protein sequence ID" value="ACJ19702.1"/>
    <property type="molecule type" value="Genomic_DNA"/>
</dbReference>
<dbReference type="RefSeq" id="WP_005771614.1">
    <property type="nucleotide sequence ID" value="NC_011528.1"/>
</dbReference>
<dbReference type="SMR" id="B6J5B8"/>
<dbReference type="KEGG" id="cbc:CbuK_0419"/>
<dbReference type="HOGENOM" id="CLU_074237_2_0_6"/>
<dbReference type="GO" id="GO:0022625">
    <property type="term" value="C:cytosolic large ribosomal subunit"/>
    <property type="evidence" value="ECO:0007669"/>
    <property type="project" value="TreeGrafter"/>
</dbReference>
<dbReference type="GO" id="GO:0070180">
    <property type="term" value="F:large ribosomal subunit rRNA binding"/>
    <property type="evidence" value="ECO:0007669"/>
    <property type="project" value="UniProtKB-UniRule"/>
</dbReference>
<dbReference type="GO" id="GO:0003735">
    <property type="term" value="F:structural constituent of ribosome"/>
    <property type="evidence" value="ECO:0007669"/>
    <property type="project" value="InterPro"/>
</dbReference>
<dbReference type="GO" id="GO:0006412">
    <property type="term" value="P:translation"/>
    <property type="evidence" value="ECO:0007669"/>
    <property type="project" value="UniProtKB-UniRule"/>
</dbReference>
<dbReference type="CDD" id="cd00349">
    <property type="entry name" value="Ribosomal_L11"/>
    <property type="match status" value="1"/>
</dbReference>
<dbReference type="FunFam" id="1.10.10.250:FF:000001">
    <property type="entry name" value="50S ribosomal protein L11"/>
    <property type="match status" value="1"/>
</dbReference>
<dbReference type="FunFam" id="3.30.1550.10:FF:000013">
    <property type="entry name" value="50S ribosomal protein L11"/>
    <property type="match status" value="1"/>
</dbReference>
<dbReference type="Gene3D" id="1.10.10.250">
    <property type="entry name" value="Ribosomal protein L11, C-terminal domain"/>
    <property type="match status" value="1"/>
</dbReference>
<dbReference type="Gene3D" id="3.30.1550.10">
    <property type="entry name" value="Ribosomal protein L11/L12, N-terminal domain"/>
    <property type="match status" value="1"/>
</dbReference>
<dbReference type="HAMAP" id="MF_00736">
    <property type="entry name" value="Ribosomal_uL11"/>
    <property type="match status" value="1"/>
</dbReference>
<dbReference type="InterPro" id="IPR000911">
    <property type="entry name" value="Ribosomal_uL11"/>
</dbReference>
<dbReference type="InterPro" id="IPR006519">
    <property type="entry name" value="Ribosomal_uL11_bac-typ"/>
</dbReference>
<dbReference type="InterPro" id="IPR020783">
    <property type="entry name" value="Ribosomal_uL11_C"/>
</dbReference>
<dbReference type="InterPro" id="IPR036769">
    <property type="entry name" value="Ribosomal_uL11_C_sf"/>
</dbReference>
<dbReference type="InterPro" id="IPR020785">
    <property type="entry name" value="Ribosomal_uL11_CS"/>
</dbReference>
<dbReference type="InterPro" id="IPR020784">
    <property type="entry name" value="Ribosomal_uL11_N"/>
</dbReference>
<dbReference type="InterPro" id="IPR036796">
    <property type="entry name" value="Ribosomal_uL11_N_sf"/>
</dbReference>
<dbReference type="NCBIfam" id="TIGR01632">
    <property type="entry name" value="L11_bact"/>
    <property type="match status" value="1"/>
</dbReference>
<dbReference type="PANTHER" id="PTHR11661">
    <property type="entry name" value="60S RIBOSOMAL PROTEIN L12"/>
    <property type="match status" value="1"/>
</dbReference>
<dbReference type="PANTHER" id="PTHR11661:SF1">
    <property type="entry name" value="LARGE RIBOSOMAL SUBUNIT PROTEIN UL11M"/>
    <property type="match status" value="1"/>
</dbReference>
<dbReference type="Pfam" id="PF00298">
    <property type="entry name" value="Ribosomal_L11"/>
    <property type="match status" value="1"/>
</dbReference>
<dbReference type="Pfam" id="PF03946">
    <property type="entry name" value="Ribosomal_L11_N"/>
    <property type="match status" value="1"/>
</dbReference>
<dbReference type="SMART" id="SM00649">
    <property type="entry name" value="RL11"/>
    <property type="match status" value="1"/>
</dbReference>
<dbReference type="SUPFAM" id="SSF54747">
    <property type="entry name" value="Ribosomal L11/L12e N-terminal domain"/>
    <property type="match status" value="1"/>
</dbReference>
<dbReference type="SUPFAM" id="SSF46906">
    <property type="entry name" value="Ribosomal protein L11, C-terminal domain"/>
    <property type="match status" value="1"/>
</dbReference>
<dbReference type="PROSITE" id="PS00359">
    <property type="entry name" value="RIBOSOMAL_L11"/>
    <property type="match status" value="1"/>
</dbReference>
<gene>
    <name evidence="1" type="primary">rplK</name>
    <name type="ordered locus">CbuK_0419</name>
</gene>
<protein>
    <recommendedName>
        <fullName evidence="1">Large ribosomal subunit protein uL11</fullName>
    </recommendedName>
    <alternativeName>
        <fullName evidence="2">50S ribosomal protein L11</fullName>
    </alternativeName>
</protein>